<name>PUR9_BACCZ</name>
<gene>
    <name evidence="1" type="primary">purH</name>
    <name type="ordered locus">BCE33L0273</name>
</gene>
<comment type="catalytic activity">
    <reaction evidence="1">
        <text>(6R)-10-formyltetrahydrofolate + 5-amino-1-(5-phospho-beta-D-ribosyl)imidazole-4-carboxamide = 5-formamido-1-(5-phospho-D-ribosyl)imidazole-4-carboxamide + (6S)-5,6,7,8-tetrahydrofolate</text>
        <dbReference type="Rhea" id="RHEA:22192"/>
        <dbReference type="ChEBI" id="CHEBI:57453"/>
        <dbReference type="ChEBI" id="CHEBI:58467"/>
        <dbReference type="ChEBI" id="CHEBI:58475"/>
        <dbReference type="ChEBI" id="CHEBI:195366"/>
        <dbReference type="EC" id="2.1.2.3"/>
    </reaction>
</comment>
<comment type="catalytic activity">
    <reaction evidence="1">
        <text>IMP + H2O = 5-formamido-1-(5-phospho-D-ribosyl)imidazole-4-carboxamide</text>
        <dbReference type="Rhea" id="RHEA:18445"/>
        <dbReference type="ChEBI" id="CHEBI:15377"/>
        <dbReference type="ChEBI" id="CHEBI:58053"/>
        <dbReference type="ChEBI" id="CHEBI:58467"/>
        <dbReference type="EC" id="3.5.4.10"/>
    </reaction>
</comment>
<comment type="pathway">
    <text evidence="1">Purine metabolism; IMP biosynthesis via de novo pathway; 5-formamido-1-(5-phospho-D-ribosyl)imidazole-4-carboxamide from 5-amino-1-(5-phospho-D-ribosyl)imidazole-4-carboxamide (10-formyl THF route): step 1/1.</text>
</comment>
<comment type="pathway">
    <text evidence="1">Purine metabolism; IMP biosynthesis via de novo pathway; IMP from 5-formamido-1-(5-phospho-D-ribosyl)imidazole-4-carboxamide: step 1/1.</text>
</comment>
<comment type="domain">
    <text evidence="1">The IMP cyclohydrolase activity resides in the N-terminal region.</text>
</comment>
<comment type="similarity">
    <text evidence="1">Belongs to the PurH family.</text>
</comment>
<sequence>MKKRALVSVSDKTGVVEFVKGLLEQGIEVISTGGTKKLLEENGLQVIGISEVTGFPEIMDGRVKTLHPNIHGGLLAVRDNETHVAQMNELGMEPIDFVIVNLYPFKETIAKPDVTFADAIENIDIGGPTMIRSAAKNHKFVSVIVDPVDYDVVLAELKVNGEVKEETKRKLAAKVFRHTAAYDALISNYLTEQMGEESPETLTVTFEKKQDLRYGENPHQTATFYKAPFAVTSSVAYAEQLHGKELSYNNINDADAALSIVKEFTEPAVVAVKHMNPCGVGVGTDIHEAYTRAYEADPVSIFGGIIAANREIDKATAEKLHEIFLEIIIAPSFSKEALEVLQSKKNLRLLTVNIEKATSASKKLTSVQGGLLVQEEDTLSLDESTISIPTKREPSEQEWKDLKLAWKVVKHVKSNAIVLAKDDMTIGVGAGQMNRVGSAKIAITQAGEKAQGSALASDAFFPMPDTLEEAAKAGITAIIQPGGSIRDEDSIKVADTYGIAMVFTGVRHFKH</sequence>
<feature type="chain" id="PRO_1000018841" description="Bifunctional purine biosynthesis protein PurH">
    <location>
        <begin position="1"/>
        <end position="511"/>
    </location>
</feature>
<feature type="domain" description="MGS-like" evidence="2">
    <location>
        <begin position="1"/>
        <end position="145"/>
    </location>
</feature>
<evidence type="ECO:0000255" key="1">
    <source>
        <dbReference type="HAMAP-Rule" id="MF_00139"/>
    </source>
</evidence>
<evidence type="ECO:0000255" key="2">
    <source>
        <dbReference type="PROSITE-ProRule" id="PRU01202"/>
    </source>
</evidence>
<reference key="1">
    <citation type="journal article" date="2006" name="J. Bacteriol.">
        <title>Pathogenomic sequence analysis of Bacillus cereus and Bacillus thuringiensis isolates closely related to Bacillus anthracis.</title>
        <authorList>
            <person name="Han C.S."/>
            <person name="Xie G."/>
            <person name="Challacombe J.F."/>
            <person name="Altherr M.R."/>
            <person name="Bhotika S.S."/>
            <person name="Bruce D."/>
            <person name="Campbell C.S."/>
            <person name="Campbell M.L."/>
            <person name="Chen J."/>
            <person name="Chertkov O."/>
            <person name="Cleland C."/>
            <person name="Dimitrijevic M."/>
            <person name="Doggett N.A."/>
            <person name="Fawcett J.J."/>
            <person name="Glavina T."/>
            <person name="Goodwin L.A."/>
            <person name="Hill K.K."/>
            <person name="Hitchcock P."/>
            <person name="Jackson P.J."/>
            <person name="Keim P."/>
            <person name="Kewalramani A.R."/>
            <person name="Longmire J."/>
            <person name="Lucas S."/>
            <person name="Malfatti S."/>
            <person name="McMurry K."/>
            <person name="Meincke L.J."/>
            <person name="Misra M."/>
            <person name="Moseman B.L."/>
            <person name="Mundt M."/>
            <person name="Munk A.C."/>
            <person name="Okinaka R.T."/>
            <person name="Parson-Quintana B."/>
            <person name="Reilly L.P."/>
            <person name="Richardson P."/>
            <person name="Robinson D.L."/>
            <person name="Rubin E."/>
            <person name="Saunders E."/>
            <person name="Tapia R."/>
            <person name="Tesmer J.G."/>
            <person name="Thayer N."/>
            <person name="Thompson L.S."/>
            <person name="Tice H."/>
            <person name="Ticknor L.O."/>
            <person name="Wills P.L."/>
            <person name="Brettin T.S."/>
            <person name="Gilna P."/>
        </authorList>
    </citation>
    <scope>NUCLEOTIDE SEQUENCE [LARGE SCALE GENOMIC DNA]</scope>
    <source>
        <strain>ZK / E33L</strain>
    </source>
</reference>
<protein>
    <recommendedName>
        <fullName evidence="1">Bifunctional purine biosynthesis protein PurH</fullName>
    </recommendedName>
    <domain>
        <recommendedName>
            <fullName evidence="1">Phosphoribosylaminoimidazolecarboxamide formyltransferase</fullName>
            <ecNumber evidence="1">2.1.2.3</ecNumber>
        </recommendedName>
        <alternativeName>
            <fullName evidence="1">AICAR transformylase</fullName>
        </alternativeName>
    </domain>
    <domain>
        <recommendedName>
            <fullName evidence="1">IMP cyclohydrolase</fullName>
            <ecNumber evidence="1">3.5.4.10</ecNumber>
        </recommendedName>
        <alternativeName>
            <fullName evidence="1">ATIC</fullName>
        </alternativeName>
        <alternativeName>
            <fullName evidence="1">IMP synthase</fullName>
        </alternativeName>
        <alternativeName>
            <fullName evidence="1">Inosinicase</fullName>
        </alternativeName>
    </domain>
</protein>
<accession>Q63GS9</accession>
<proteinExistence type="inferred from homology"/>
<dbReference type="EC" id="2.1.2.3" evidence="1"/>
<dbReference type="EC" id="3.5.4.10" evidence="1"/>
<dbReference type="EMBL" id="CP000001">
    <property type="protein sequence ID" value="AAU19967.1"/>
    <property type="molecule type" value="Genomic_DNA"/>
</dbReference>
<dbReference type="RefSeq" id="WP_000745422.1">
    <property type="nucleotide sequence ID" value="NC_006274.1"/>
</dbReference>
<dbReference type="SMR" id="Q63GS9"/>
<dbReference type="KEGG" id="bcz:BCE33L0273"/>
<dbReference type="PATRIC" id="fig|288681.22.peg.5337"/>
<dbReference type="UniPathway" id="UPA00074">
    <property type="reaction ID" value="UER00133"/>
</dbReference>
<dbReference type="UniPathway" id="UPA00074">
    <property type="reaction ID" value="UER00135"/>
</dbReference>
<dbReference type="Proteomes" id="UP000002612">
    <property type="component" value="Chromosome"/>
</dbReference>
<dbReference type="GO" id="GO:0005829">
    <property type="term" value="C:cytosol"/>
    <property type="evidence" value="ECO:0007669"/>
    <property type="project" value="TreeGrafter"/>
</dbReference>
<dbReference type="GO" id="GO:0003937">
    <property type="term" value="F:IMP cyclohydrolase activity"/>
    <property type="evidence" value="ECO:0007669"/>
    <property type="project" value="UniProtKB-UniRule"/>
</dbReference>
<dbReference type="GO" id="GO:0004643">
    <property type="term" value="F:phosphoribosylaminoimidazolecarboxamide formyltransferase activity"/>
    <property type="evidence" value="ECO:0007669"/>
    <property type="project" value="UniProtKB-UniRule"/>
</dbReference>
<dbReference type="GO" id="GO:0006189">
    <property type="term" value="P:'de novo' IMP biosynthetic process"/>
    <property type="evidence" value="ECO:0007669"/>
    <property type="project" value="UniProtKB-UniRule"/>
</dbReference>
<dbReference type="CDD" id="cd01421">
    <property type="entry name" value="IMPCH"/>
    <property type="match status" value="1"/>
</dbReference>
<dbReference type="FunFam" id="3.40.140.20:FF:000001">
    <property type="entry name" value="Bifunctional purine biosynthesis protein PurH"/>
    <property type="match status" value="1"/>
</dbReference>
<dbReference type="FunFam" id="3.40.140.20:FF:000002">
    <property type="entry name" value="Bifunctional purine biosynthesis protein PurH"/>
    <property type="match status" value="1"/>
</dbReference>
<dbReference type="FunFam" id="3.40.50.1380:FF:000001">
    <property type="entry name" value="Bifunctional purine biosynthesis protein PurH"/>
    <property type="match status" value="1"/>
</dbReference>
<dbReference type="Gene3D" id="3.40.140.20">
    <property type="match status" value="2"/>
</dbReference>
<dbReference type="Gene3D" id="3.40.50.1380">
    <property type="entry name" value="Methylglyoxal synthase-like domain"/>
    <property type="match status" value="1"/>
</dbReference>
<dbReference type="HAMAP" id="MF_00139">
    <property type="entry name" value="PurH"/>
    <property type="match status" value="1"/>
</dbReference>
<dbReference type="InterPro" id="IPR024051">
    <property type="entry name" value="AICAR_Tfase_dup_dom_sf"/>
</dbReference>
<dbReference type="InterPro" id="IPR016193">
    <property type="entry name" value="Cytidine_deaminase-like"/>
</dbReference>
<dbReference type="InterPro" id="IPR011607">
    <property type="entry name" value="MGS-like_dom"/>
</dbReference>
<dbReference type="InterPro" id="IPR036914">
    <property type="entry name" value="MGS-like_dom_sf"/>
</dbReference>
<dbReference type="InterPro" id="IPR002695">
    <property type="entry name" value="PurH-like"/>
</dbReference>
<dbReference type="NCBIfam" id="NF002049">
    <property type="entry name" value="PRK00881.1"/>
    <property type="match status" value="1"/>
</dbReference>
<dbReference type="NCBIfam" id="TIGR00355">
    <property type="entry name" value="purH"/>
    <property type="match status" value="1"/>
</dbReference>
<dbReference type="PANTHER" id="PTHR11692:SF0">
    <property type="entry name" value="BIFUNCTIONAL PURINE BIOSYNTHESIS PROTEIN ATIC"/>
    <property type="match status" value="1"/>
</dbReference>
<dbReference type="PANTHER" id="PTHR11692">
    <property type="entry name" value="BIFUNCTIONAL PURINE BIOSYNTHESIS PROTEIN PURH"/>
    <property type="match status" value="1"/>
</dbReference>
<dbReference type="Pfam" id="PF01808">
    <property type="entry name" value="AICARFT_IMPCHas"/>
    <property type="match status" value="1"/>
</dbReference>
<dbReference type="Pfam" id="PF02142">
    <property type="entry name" value="MGS"/>
    <property type="match status" value="1"/>
</dbReference>
<dbReference type="PIRSF" id="PIRSF000414">
    <property type="entry name" value="AICARFT_IMPCHas"/>
    <property type="match status" value="1"/>
</dbReference>
<dbReference type="SMART" id="SM00798">
    <property type="entry name" value="AICARFT_IMPCHas"/>
    <property type="match status" value="1"/>
</dbReference>
<dbReference type="SMART" id="SM00851">
    <property type="entry name" value="MGS"/>
    <property type="match status" value="1"/>
</dbReference>
<dbReference type="SUPFAM" id="SSF53927">
    <property type="entry name" value="Cytidine deaminase-like"/>
    <property type="match status" value="1"/>
</dbReference>
<dbReference type="SUPFAM" id="SSF52335">
    <property type="entry name" value="Methylglyoxal synthase-like"/>
    <property type="match status" value="1"/>
</dbReference>
<dbReference type="PROSITE" id="PS51855">
    <property type="entry name" value="MGS"/>
    <property type="match status" value="1"/>
</dbReference>
<organism>
    <name type="scientific">Bacillus cereus (strain ZK / E33L)</name>
    <dbReference type="NCBI Taxonomy" id="288681"/>
    <lineage>
        <taxon>Bacteria</taxon>
        <taxon>Bacillati</taxon>
        <taxon>Bacillota</taxon>
        <taxon>Bacilli</taxon>
        <taxon>Bacillales</taxon>
        <taxon>Bacillaceae</taxon>
        <taxon>Bacillus</taxon>
        <taxon>Bacillus cereus group</taxon>
    </lineage>
</organism>
<keyword id="KW-0378">Hydrolase</keyword>
<keyword id="KW-0511">Multifunctional enzyme</keyword>
<keyword id="KW-0658">Purine biosynthesis</keyword>
<keyword id="KW-0808">Transferase</keyword>